<keyword id="KW-0963">Cytoplasm</keyword>
<keyword id="KW-0489">Methyltransferase</keyword>
<keyword id="KW-0539">Nucleus</keyword>
<keyword id="KW-1185">Reference proteome</keyword>
<keyword id="KW-0949">S-adenosyl-L-methionine</keyword>
<keyword id="KW-0808">Transferase</keyword>
<organism>
    <name type="scientific">Schizosaccharomyces pombe (strain 972 / ATCC 24843)</name>
    <name type="common">Fission yeast</name>
    <dbReference type="NCBI Taxonomy" id="284812"/>
    <lineage>
        <taxon>Eukaryota</taxon>
        <taxon>Fungi</taxon>
        <taxon>Dikarya</taxon>
        <taxon>Ascomycota</taxon>
        <taxon>Taphrinomycotina</taxon>
        <taxon>Schizosaccharomycetes</taxon>
        <taxon>Schizosaccharomycetales</taxon>
        <taxon>Schizosaccharomycetaceae</taxon>
        <taxon>Schizosaccharomyces</taxon>
    </lineage>
</organism>
<evidence type="ECO:0000250" key="1"/>
<evidence type="ECO:0000256" key="2">
    <source>
        <dbReference type="SAM" id="MobiDB-lite"/>
    </source>
</evidence>
<evidence type="ECO:0000269" key="3">
    <source>
    </source>
</evidence>
<evidence type="ECO:0000305" key="4"/>
<accession>Q10162</accession>
<name>BUD23_SCHPO</name>
<gene>
    <name type="primary">bud23</name>
    <name type="ORF">SPAC26A3.06</name>
</gene>
<sequence>MSRPEHIAPPEIFYNDVEAGKYSTNTRIQSIQTEMSERALELLDAEGPSFILDIGCGSGISTQIGESQGHVVVGMDISPSMLSVALESQEIEGDLLLCDMGTGVPFRPGTFDGVISISAIQWLLNADKTCNVPQRRLNRFFQTLYISMKRGGRAVMQYYPETEKSQQMIMDTARKAGFAGGIVVDHPESKRQKKYYLVLQAGGTRTLDISSMTLDQEGTNAKQRKLKKKQDMSTREYIIHKKELNRKRGRLHVPKDSKYSGRRRKAAF</sequence>
<comment type="function">
    <text evidence="1">S-adenosyl-L-methionine-dependent methyltransferase that specifically methylates the N(7) position of a guanine in 18S rRNA. Important for biogenesis end export of the 40S ribosomal subunit independent on its methyltransferase activity (By similarity).</text>
</comment>
<comment type="catalytic activity">
    <reaction>
        <text>a guanosine in 18S rRNA + S-adenosyl-L-methionine = an N(7)-methylguanosine in 18S rRNA + S-adenosyl-L-homocysteine</text>
        <dbReference type="Rhea" id="RHEA:54584"/>
        <dbReference type="Rhea" id="RHEA-COMP:13937"/>
        <dbReference type="Rhea" id="RHEA-COMP:13938"/>
        <dbReference type="ChEBI" id="CHEBI:57856"/>
        <dbReference type="ChEBI" id="CHEBI:59789"/>
        <dbReference type="ChEBI" id="CHEBI:74269"/>
        <dbReference type="ChEBI" id="CHEBI:74480"/>
    </reaction>
</comment>
<comment type="subcellular location">
    <subcellularLocation>
        <location evidence="3">Cytoplasm</location>
    </subcellularLocation>
    <subcellularLocation>
        <location evidence="3">Nucleus</location>
    </subcellularLocation>
</comment>
<comment type="similarity">
    <text evidence="4">Belongs to the class I-like SAM-binding methyltransferase superfamily. BUD23/WBSCR22 family.</text>
</comment>
<proteinExistence type="inferred from homology"/>
<dbReference type="EC" id="2.1.1.-"/>
<dbReference type="EMBL" id="CU329670">
    <property type="protein sequence ID" value="CAA93229.1"/>
    <property type="molecule type" value="Genomic_DNA"/>
</dbReference>
<dbReference type="PIR" id="T38394">
    <property type="entry name" value="T38394"/>
</dbReference>
<dbReference type="RefSeq" id="NP_594149.1">
    <property type="nucleotide sequence ID" value="NM_001019573.2"/>
</dbReference>
<dbReference type="SMR" id="Q10162"/>
<dbReference type="BioGRID" id="279138">
    <property type="interactions" value="10"/>
</dbReference>
<dbReference type="FunCoup" id="Q10162">
    <property type="interactions" value="630"/>
</dbReference>
<dbReference type="STRING" id="284812.Q10162"/>
<dbReference type="iPTMnet" id="Q10162"/>
<dbReference type="PaxDb" id="4896-SPAC26A3.06.1"/>
<dbReference type="EnsemblFungi" id="SPAC26A3.06.1">
    <property type="protein sequence ID" value="SPAC26A3.06.1:pep"/>
    <property type="gene ID" value="SPAC26A3.06"/>
</dbReference>
<dbReference type="GeneID" id="2542685"/>
<dbReference type="KEGG" id="spo:2542685"/>
<dbReference type="PomBase" id="SPAC26A3.06">
    <property type="gene designation" value="bud23"/>
</dbReference>
<dbReference type="VEuPathDB" id="FungiDB:SPAC26A3.06"/>
<dbReference type="eggNOG" id="KOG1541">
    <property type="taxonomic scope" value="Eukaryota"/>
</dbReference>
<dbReference type="HOGENOM" id="CLU_055194_0_2_1"/>
<dbReference type="InParanoid" id="Q10162"/>
<dbReference type="OMA" id="WIQEKKE"/>
<dbReference type="PhylomeDB" id="Q10162"/>
<dbReference type="PRO" id="PR:Q10162"/>
<dbReference type="Proteomes" id="UP000002485">
    <property type="component" value="Chromosome I"/>
</dbReference>
<dbReference type="GO" id="GO:0005829">
    <property type="term" value="C:cytosol"/>
    <property type="evidence" value="ECO:0007005"/>
    <property type="project" value="PomBase"/>
</dbReference>
<dbReference type="GO" id="GO:0005730">
    <property type="term" value="C:nucleolus"/>
    <property type="evidence" value="ECO:0000318"/>
    <property type="project" value="GO_Central"/>
</dbReference>
<dbReference type="GO" id="GO:0005634">
    <property type="term" value="C:nucleus"/>
    <property type="evidence" value="ECO:0007005"/>
    <property type="project" value="PomBase"/>
</dbReference>
<dbReference type="GO" id="GO:0016435">
    <property type="term" value="F:rRNA (guanine) methyltransferase activity"/>
    <property type="evidence" value="ECO:0000318"/>
    <property type="project" value="GO_Central"/>
</dbReference>
<dbReference type="GO" id="GO:0070043">
    <property type="term" value="F:rRNA (guanine-N7-)-methyltransferase activity"/>
    <property type="evidence" value="ECO:0000266"/>
    <property type="project" value="PomBase"/>
</dbReference>
<dbReference type="GO" id="GO:0070476">
    <property type="term" value="P:rRNA (guanine-N7)-methylation"/>
    <property type="evidence" value="ECO:0000318"/>
    <property type="project" value="GO_Central"/>
</dbReference>
<dbReference type="CDD" id="cd02440">
    <property type="entry name" value="AdoMet_MTases"/>
    <property type="match status" value="1"/>
</dbReference>
<dbReference type="FunFam" id="3.40.50.150:FF:000017">
    <property type="entry name" value="probable 18S rRNA (Guanine-N(7))-methyltransferase"/>
    <property type="match status" value="1"/>
</dbReference>
<dbReference type="Gene3D" id="3.40.50.150">
    <property type="entry name" value="Vaccinia Virus protein VP39"/>
    <property type="match status" value="1"/>
</dbReference>
<dbReference type="InterPro" id="IPR039769">
    <property type="entry name" value="Bud23-like"/>
</dbReference>
<dbReference type="InterPro" id="IPR022238">
    <property type="entry name" value="Bud23_C"/>
</dbReference>
<dbReference type="InterPro" id="IPR013216">
    <property type="entry name" value="Methyltransf_11"/>
</dbReference>
<dbReference type="InterPro" id="IPR029063">
    <property type="entry name" value="SAM-dependent_MTases_sf"/>
</dbReference>
<dbReference type="PANTHER" id="PTHR12734:SF0">
    <property type="entry name" value="18S RRNA (GUANINE-N(7))-METHYLTRANSFERASE-RELATED"/>
    <property type="match status" value="1"/>
</dbReference>
<dbReference type="PANTHER" id="PTHR12734">
    <property type="entry name" value="METHYLTRANSFERASE-RELATED"/>
    <property type="match status" value="1"/>
</dbReference>
<dbReference type="Pfam" id="PF08241">
    <property type="entry name" value="Methyltransf_11"/>
    <property type="match status" value="1"/>
</dbReference>
<dbReference type="Pfam" id="PF12589">
    <property type="entry name" value="WBS_methylT"/>
    <property type="match status" value="1"/>
</dbReference>
<dbReference type="SUPFAM" id="SSF53335">
    <property type="entry name" value="S-adenosyl-L-methionine-dependent methyltransferases"/>
    <property type="match status" value="1"/>
</dbReference>
<protein>
    <recommendedName>
        <fullName>18S rRNA (guanine-N(7))-methyltransferase bud23</fullName>
        <ecNumber>2.1.1.-</ecNumber>
    </recommendedName>
    <alternativeName>
        <fullName>Bud site selection protein 23 homolog</fullName>
    </alternativeName>
</protein>
<feature type="chain" id="PRO_0000116474" description="18S rRNA (guanine-N(7))-methyltransferase bud23">
    <location>
        <begin position="1"/>
        <end position="268"/>
    </location>
</feature>
<feature type="region of interest" description="Disordered" evidence="2">
    <location>
        <begin position="246"/>
        <end position="268"/>
    </location>
</feature>
<reference key="1">
    <citation type="journal article" date="2002" name="Nature">
        <title>The genome sequence of Schizosaccharomyces pombe.</title>
        <authorList>
            <person name="Wood V."/>
            <person name="Gwilliam R."/>
            <person name="Rajandream M.A."/>
            <person name="Lyne M.H."/>
            <person name="Lyne R."/>
            <person name="Stewart A."/>
            <person name="Sgouros J.G."/>
            <person name="Peat N."/>
            <person name="Hayles J."/>
            <person name="Baker S.G."/>
            <person name="Basham D."/>
            <person name="Bowman S."/>
            <person name="Brooks K."/>
            <person name="Brown D."/>
            <person name="Brown S."/>
            <person name="Chillingworth T."/>
            <person name="Churcher C.M."/>
            <person name="Collins M."/>
            <person name="Connor R."/>
            <person name="Cronin A."/>
            <person name="Davis P."/>
            <person name="Feltwell T."/>
            <person name="Fraser A."/>
            <person name="Gentles S."/>
            <person name="Goble A."/>
            <person name="Hamlin N."/>
            <person name="Harris D.E."/>
            <person name="Hidalgo J."/>
            <person name="Hodgson G."/>
            <person name="Holroyd S."/>
            <person name="Hornsby T."/>
            <person name="Howarth S."/>
            <person name="Huckle E.J."/>
            <person name="Hunt S."/>
            <person name="Jagels K."/>
            <person name="James K.D."/>
            <person name="Jones L."/>
            <person name="Jones M."/>
            <person name="Leather S."/>
            <person name="McDonald S."/>
            <person name="McLean J."/>
            <person name="Mooney P."/>
            <person name="Moule S."/>
            <person name="Mungall K.L."/>
            <person name="Murphy L.D."/>
            <person name="Niblett D."/>
            <person name="Odell C."/>
            <person name="Oliver K."/>
            <person name="O'Neil S."/>
            <person name="Pearson D."/>
            <person name="Quail M.A."/>
            <person name="Rabbinowitsch E."/>
            <person name="Rutherford K.M."/>
            <person name="Rutter S."/>
            <person name="Saunders D."/>
            <person name="Seeger K."/>
            <person name="Sharp S."/>
            <person name="Skelton J."/>
            <person name="Simmonds M.N."/>
            <person name="Squares R."/>
            <person name="Squares S."/>
            <person name="Stevens K."/>
            <person name="Taylor K."/>
            <person name="Taylor R.G."/>
            <person name="Tivey A."/>
            <person name="Walsh S.V."/>
            <person name="Warren T."/>
            <person name="Whitehead S."/>
            <person name="Woodward J.R."/>
            <person name="Volckaert G."/>
            <person name="Aert R."/>
            <person name="Robben J."/>
            <person name="Grymonprez B."/>
            <person name="Weltjens I."/>
            <person name="Vanstreels E."/>
            <person name="Rieger M."/>
            <person name="Schaefer M."/>
            <person name="Mueller-Auer S."/>
            <person name="Gabel C."/>
            <person name="Fuchs M."/>
            <person name="Duesterhoeft A."/>
            <person name="Fritzc C."/>
            <person name="Holzer E."/>
            <person name="Moestl D."/>
            <person name="Hilbert H."/>
            <person name="Borzym K."/>
            <person name="Langer I."/>
            <person name="Beck A."/>
            <person name="Lehrach H."/>
            <person name="Reinhardt R."/>
            <person name="Pohl T.M."/>
            <person name="Eger P."/>
            <person name="Zimmermann W."/>
            <person name="Wedler H."/>
            <person name="Wambutt R."/>
            <person name="Purnelle B."/>
            <person name="Goffeau A."/>
            <person name="Cadieu E."/>
            <person name="Dreano S."/>
            <person name="Gloux S."/>
            <person name="Lelaure V."/>
            <person name="Mottier S."/>
            <person name="Galibert F."/>
            <person name="Aves S.J."/>
            <person name="Xiang Z."/>
            <person name="Hunt C."/>
            <person name="Moore K."/>
            <person name="Hurst S.M."/>
            <person name="Lucas M."/>
            <person name="Rochet M."/>
            <person name="Gaillardin C."/>
            <person name="Tallada V.A."/>
            <person name="Garzon A."/>
            <person name="Thode G."/>
            <person name="Daga R.R."/>
            <person name="Cruzado L."/>
            <person name="Jimenez J."/>
            <person name="Sanchez M."/>
            <person name="del Rey F."/>
            <person name="Benito J."/>
            <person name="Dominguez A."/>
            <person name="Revuelta J.L."/>
            <person name="Moreno S."/>
            <person name="Armstrong J."/>
            <person name="Forsburg S.L."/>
            <person name="Cerutti L."/>
            <person name="Lowe T."/>
            <person name="McCombie W.R."/>
            <person name="Paulsen I."/>
            <person name="Potashkin J."/>
            <person name="Shpakovski G.V."/>
            <person name="Ussery D."/>
            <person name="Barrell B.G."/>
            <person name="Nurse P."/>
        </authorList>
    </citation>
    <scope>NUCLEOTIDE SEQUENCE [LARGE SCALE GENOMIC DNA]</scope>
    <source>
        <strain>972 / ATCC 24843</strain>
    </source>
</reference>
<reference key="2">
    <citation type="journal article" date="2006" name="Nat. Biotechnol.">
        <title>ORFeome cloning and global analysis of protein localization in the fission yeast Schizosaccharomyces pombe.</title>
        <authorList>
            <person name="Matsuyama A."/>
            <person name="Arai R."/>
            <person name="Yashiroda Y."/>
            <person name="Shirai A."/>
            <person name="Kamata A."/>
            <person name="Sekido S."/>
            <person name="Kobayashi Y."/>
            <person name="Hashimoto A."/>
            <person name="Hamamoto M."/>
            <person name="Hiraoka Y."/>
            <person name="Horinouchi S."/>
            <person name="Yoshida M."/>
        </authorList>
    </citation>
    <scope>SUBCELLULAR LOCATION [LARGE SCALE ANALYSIS]</scope>
</reference>